<organism>
    <name type="scientific">Burkholderia pseudomallei (strain 1106a)</name>
    <dbReference type="NCBI Taxonomy" id="357348"/>
    <lineage>
        <taxon>Bacteria</taxon>
        <taxon>Pseudomonadati</taxon>
        <taxon>Pseudomonadota</taxon>
        <taxon>Betaproteobacteria</taxon>
        <taxon>Burkholderiales</taxon>
        <taxon>Burkholderiaceae</taxon>
        <taxon>Burkholderia</taxon>
        <taxon>pseudomallei group</taxon>
    </lineage>
</organism>
<accession>A3P022</accession>
<dbReference type="EMBL" id="CP000572">
    <property type="protein sequence ID" value="ABN92423.1"/>
    <property type="molecule type" value="Genomic_DNA"/>
</dbReference>
<dbReference type="RefSeq" id="WP_004199902.1">
    <property type="nucleotide sequence ID" value="NC_009076.1"/>
</dbReference>
<dbReference type="SMR" id="A3P022"/>
<dbReference type="GeneID" id="93061745"/>
<dbReference type="KEGG" id="bpl:BURPS1106A_3713"/>
<dbReference type="HOGENOM" id="CLU_086034_5_3_4"/>
<dbReference type="Proteomes" id="UP000006738">
    <property type="component" value="Chromosome I"/>
</dbReference>
<dbReference type="GO" id="GO:0033281">
    <property type="term" value="C:TAT protein transport complex"/>
    <property type="evidence" value="ECO:0007669"/>
    <property type="project" value="UniProtKB-UniRule"/>
</dbReference>
<dbReference type="GO" id="GO:0008320">
    <property type="term" value="F:protein transmembrane transporter activity"/>
    <property type="evidence" value="ECO:0007669"/>
    <property type="project" value="UniProtKB-UniRule"/>
</dbReference>
<dbReference type="GO" id="GO:0043953">
    <property type="term" value="P:protein transport by the Tat complex"/>
    <property type="evidence" value="ECO:0007669"/>
    <property type="project" value="UniProtKB-UniRule"/>
</dbReference>
<dbReference type="Gene3D" id="1.20.5.3310">
    <property type="match status" value="1"/>
</dbReference>
<dbReference type="HAMAP" id="MF_00236">
    <property type="entry name" value="TatA_E"/>
    <property type="match status" value="1"/>
</dbReference>
<dbReference type="InterPro" id="IPR003369">
    <property type="entry name" value="TatA/B/E"/>
</dbReference>
<dbReference type="InterPro" id="IPR006312">
    <property type="entry name" value="TatA/E"/>
</dbReference>
<dbReference type="NCBIfam" id="NF002813">
    <property type="entry name" value="PRK02958.1"/>
    <property type="match status" value="1"/>
</dbReference>
<dbReference type="NCBIfam" id="TIGR01411">
    <property type="entry name" value="tatAE"/>
    <property type="match status" value="1"/>
</dbReference>
<dbReference type="PANTHER" id="PTHR42982">
    <property type="entry name" value="SEC-INDEPENDENT PROTEIN TRANSLOCASE PROTEIN TATA"/>
    <property type="match status" value="1"/>
</dbReference>
<dbReference type="PANTHER" id="PTHR42982:SF1">
    <property type="entry name" value="SEC-INDEPENDENT PROTEIN TRANSLOCASE PROTEIN TATA"/>
    <property type="match status" value="1"/>
</dbReference>
<dbReference type="Pfam" id="PF02416">
    <property type="entry name" value="TatA_B_E"/>
    <property type="match status" value="1"/>
</dbReference>
<protein>
    <recommendedName>
        <fullName evidence="1">Sec-independent protein translocase protein TatA</fullName>
    </recommendedName>
</protein>
<keyword id="KW-0997">Cell inner membrane</keyword>
<keyword id="KW-1003">Cell membrane</keyword>
<keyword id="KW-0472">Membrane</keyword>
<keyword id="KW-0653">Protein transport</keyword>
<keyword id="KW-0811">Translocation</keyword>
<keyword id="KW-0812">Transmembrane</keyword>
<keyword id="KW-1133">Transmembrane helix</keyword>
<keyword id="KW-0813">Transport</keyword>
<evidence type="ECO:0000255" key="1">
    <source>
        <dbReference type="HAMAP-Rule" id="MF_00236"/>
    </source>
</evidence>
<evidence type="ECO:0000256" key="2">
    <source>
        <dbReference type="SAM" id="MobiDB-lite"/>
    </source>
</evidence>
<gene>
    <name evidence="1" type="primary">tatA</name>
    <name type="ordered locus">BURPS1106A_3713</name>
</gene>
<sequence>MGGLSIWHWLIVLLIVALVFGTKKLRNIGNDLGSAVKGFKDGMKESEAPADAQQLPRSGSVNVDAKDAARSSDSNKA</sequence>
<comment type="function">
    <text evidence="1">Part of the twin-arginine translocation (Tat) system that transports large folded proteins containing a characteristic twin-arginine motif in their signal peptide across membranes. TatA could form the protein-conducting channel of the Tat system.</text>
</comment>
<comment type="subunit">
    <text evidence="1">The Tat system comprises two distinct complexes: a TatABC complex, containing multiple copies of TatA, TatB and TatC subunits, and a separate TatA complex, containing only TatA subunits. Substrates initially bind to the TatABC complex, which probably triggers association of the separate TatA complex to form the active translocon.</text>
</comment>
<comment type="subcellular location">
    <subcellularLocation>
        <location evidence="1">Cell inner membrane</location>
        <topology evidence="1">Single-pass membrane protein</topology>
    </subcellularLocation>
</comment>
<comment type="similarity">
    <text evidence="1">Belongs to the TatA/E family.</text>
</comment>
<reference key="1">
    <citation type="journal article" date="2010" name="Genome Biol. Evol.">
        <title>Continuing evolution of Burkholderia mallei through genome reduction and large-scale rearrangements.</title>
        <authorList>
            <person name="Losada L."/>
            <person name="Ronning C.M."/>
            <person name="DeShazer D."/>
            <person name="Woods D."/>
            <person name="Fedorova N."/>
            <person name="Kim H.S."/>
            <person name="Shabalina S.A."/>
            <person name="Pearson T.R."/>
            <person name="Brinkac L."/>
            <person name="Tan P."/>
            <person name="Nandi T."/>
            <person name="Crabtree J."/>
            <person name="Badger J."/>
            <person name="Beckstrom-Sternberg S."/>
            <person name="Saqib M."/>
            <person name="Schutzer S.E."/>
            <person name="Keim P."/>
            <person name="Nierman W.C."/>
        </authorList>
    </citation>
    <scope>NUCLEOTIDE SEQUENCE [LARGE SCALE GENOMIC DNA]</scope>
    <source>
        <strain>1106a</strain>
    </source>
</reference>
<proteinExistence type="inferred from homology"/>
<feature type="chain" id="PRO_1000044368" description="Sec-independent protein translocase protein TatA">
    <location>
        <begin position="1"/>
        <end position="77"/>
    </location>
</feature>
<feature type="transmembrane region" description="Helical" evidence="1">
    <location>
        <begin position="1"/>
        <end position="21"/>
    </location>
</feature>
<feature type="region of interest" description="Disordered" evidence="2">
    <location>
        <begin position="43"/>
        <end position="77"/>
    </location>
</feature>
<feature type="compositionally biased region" description="Basic and acidic residues" evidence="2">
    <location>
        <begin position="64"/>
        <end position="77"/>
    </location>
</feature>
<name>TATA_BURP0</name>